<dbReference type="EMBL" id="BA000004">
    <property type="protein sequence ID" value="BAB07474.1"/>
    <property type="molecule type" value="Genomic_DNA"/>
</dbReference>
<dbReference type="PIR" id="C84119">
    <property type="entry name" value="C84119"/>
</dbReference>
<dbReference type="RefSeq" id="WP_010899880.1">
    <property type="nucleotide sequence ID" value="NC_002570.2"/>
</dbReference>
<dbReference type="SMR" id="Q9K6H4"/>
<dbReference type="STRING" id="272558.gene:10729668"/>
<dbReference type="GeneID" id="87599302"/>
<dbReference type="KEGG" id="bha:BH3755"/>
<dbReference type="eggNOG" id="COG0224">
    <property type="taxonomic scope" value="Bacteria"/>
</dbReference>
<dbReference type="HOGENOM" id="CLU_050669_0_1_9"/>
<dbReference type="OrthoDB" id="9812769at2"/>
<dbReference type="Proteomes" id="UP000001258">
    <property type="component" value="Chromosome"/>
</dbReference>
<dbReference type="GO" id="GO:0005886">
    <property type="term" value="C:plasma membrane"/>
    <property type="evidence" value="ECO:0007669"/>
    <property type="project" value="UniProtKB-SubCell"/>
</dbReference>
<dbReference type="GO" id="GO:0045259">
    <property type="term" value="C:proton-transporting ATP synthase complex"/>
    <property type="evidence" value="ECO:0007669"/>
    <property type="project" value="UniProtKB-KW"/>
</dbReference>
<dbReference type="GO" id="GO:0005524">
    <property type="term" value="F:ATP binding"/>
    <property type="evidence" value="ECO:0007669"/>
    <property type="project" value="UniProtKB-UniRule"/>
</dbReference>
<dbReference type="GO" id="GO:0046933">
    <property type="term" value="F:proton-transporting ATP synthase activity, rotational mechanism"/>
    <property type="evidence" value="ECO:0007669"/>
    <property type="project" value="UniProtKB-UniRule"/>
</dbReference>
<dbReference type="GO" id="GO:0042777">
    <property type="term" value="P:proton motive force-driven plasma membrane ATP synthesis"/>
    <property type="evidence" value="ECO:0007669"/>
    <property type="project" value="UniProtKB-UniRule"/>
</dbReference>
<dbReference type="CDD" id="cd12151">
    <property type="entry name" value="F1-ATPase_gamma"/>
    <property type="match status" value="1"/>
</dbReference>
<dbReference type="FunFam" id="3.40.1380.10:FF:000002">
    <property type="entry name" value="ATP synthase gamma chain"/>
    <property type="match status" value="1"/>
</dbReference>
<dbReference type="Gene3D" id="3.40.1380.10">
    <property type="match status" value="1"/>
</dbReference>
<dbReference type="Gene3D" id="1.10.287.80">
    <property type="entry name" value="ATP synthase, gamma subunit, helix hairpin domain"/>
    <property type="match status" value="2"/>
</dbReference>
<dbReference type="HAMAP" id="MF_00815">
    <property type="entry name" value="ATP_synth_gamma_bact"/>
    <property type="match status" value="1"/>
</dbReference>
<dbReference type="InterPro" id="IPR035968">
    <property type="entry name" value="ATP_synth_F1_ATPase_gsu"/>
</dbReference>
<dbReference type="InterPro" id="IPR000131">
    <property type="entry name" value="ATP_synth_F1_gsu"/>
</dbReference>
<dbReference type="InterPro" id="IPR023632">
    <property type="entry name" value="ATP_synth_F1_gsu_CS"/>
</dbReference>
<dbReference type="NCBIfam" id="TIGR01146">
    <property type="entry name" value="ATPsyn_F1gamma"/>
    <property type="match status" value="1"/>
</dbReference>
<dbReference type="NCBIfam" id="NF004147">
    <property type="entry name" value="PRK05621.2-1"/>
    <property type="match status" value="1"/>
</dbReference>
<dbReference type="PANTHER" id="PTHR11693">
    <property type="entry name" value="ATP SYNTHASE GAMMA CHAIN"/>
    <property type="match status" value="1"/>
</dbReference>
<dbReference type="PANTHER" id="PTHR11693:SF22">
    <property type="entry name" value="ATP SYNTHASE SUBUNIT GAMMA, MITOCHONDRIAL"/>
    <property type="match status" value="1"/>
</dbReference>
<dbReference type="Pfam" id="PF00231">
    <property type="entry name" value="ATP-synt"/>
    <property type="match status" value="1"/>
</dbReference>
<dbReference type="PRINTS" id="PR00126">
    <property type="entry name" value="ATPASEGAMMA"/>
</dbReference>
<dbReference type="SUPFAM" id="SSF52943">
    <property type="entry name" value="ATP synthase (F1-ATPase), gamma subunit"/>
    <property type="match status" value="1"/>
</dbReference>
<dbReference type="PROSITE" id="PS00153">
    <property type="entry name" value="ATPASE_GAMMA"/>
    <property type="match status" value="1"/>
</dbReference>
<organism>
    <name type="scientific">Halalkalibacterium halodurans (strain ATCC BAA-125 / DSM 18197 / FERM 7344 / JCM 9153 / C-125)</name>
    <name type="common">Bacillus halodurans</name>
    <dbReference type="NCBI Taxonomy" id="272558"/>
    <lineage>
        <taxon>Bacteria</taxon>
        <taxon>Bacillati</taxon>
        <taxon>Bacillota</taxon>
        <taxon>Bacilli</taxon>
        <taxon>Bacillales</taxon>
        <taxon>Bacillaceae</taxon>
        <taxon>Halalkalibacterium (ex Joshi et al. 2022)</taxon>
    </lineage>
</organism>
<accession>Q9K6H4</accession>
<protein>
    <recommendedName>
        <fullName evidence="1">ATP synthase gamma chain</fullName>
    </recommendedName>
    <alternativeName>
        <fullName evidence="1">ATP synthase F1 sector gamma subunit</fullName>
    </alternativeName>
    <alternativeName>
        <fullName evidence="1">F-ATPase gamma subunit</fullName>
    </alternativeName>
</protein>
<name>ATPG_HALH5</name>
<evidence type="ECO:0000255" key="1">
    <source>
        <dbReference type="HAMAP-Rule" id="MF_00815"/>
    </source>
</evidence>
<sequence>MASLRDIKQRINSTKKTKQITKAMEMVSAAKLNRSQEKAQSFLPYTDKIREVVASIAASDTDVSHPMLEERPVKKTGYIVITSDRGLAGAYNSNLIRGLLYTINKRHKSKDEYGIFAIGRTGRDLLKKRQLPIISEMTGLSDQPTFNDIKDIAKQTVDMFADEVFDELYIWYNHFVSPIKQDVTEKKVLPLTDLSDTKVSTTYEYEPNEQVILEALLPQYAESLVYGALLDAKASEFAARMTAMSAATDNATNLIDELTLSYNRARQAAITQEITEIVGGAAALE</sequence>
<keyword id="KW-0066">ATP synthesis</keyword>
<keyword id="KW-1003">Cell membrane</keyword>
<keyword id="KW-0139">CF(1)</keyword>
<keyword id="KW-0375">Hydrogen ion transport</keyword>
<keyword id="KW-0406">Ion transport</keyword>
<keyword id="KW-0472">Membrane</keyword>
<keyword id="KW-1185">Reference proteome</keyword>
<keyword id="KW-0813">Transport</keyword>
<gene>
    <name evidence="1" type="primary">atpG</name>
    <name type="ordered locus">BH3755</name>
</gene>
<proteinExistence type="inferred from homology"/>
<comment type="function">
    <text evidence="1">Produces ATP from ADP in the presence of a proton gradient across the membrane. The gamma chain is believed to be important in regulating ATPase activity and the flow of protons through the CF(0) complex.</text>
</comment>
<comment type="subunit">
    <text evidence="1">F-type ATPases have 2 components, CF(1) - the catalytic core - and CF(0) - the membrane proton channel. CF(1) has five subunits: alpha(3), beta(3), gamma(1), delta(1), epsilon(1). CF(0) has three main subunits: a, b and c.</text>
</comment>
<comment type="subcellular location">
    <subcellularLocation>
        <location evidence="1">Cell membrane</location>
        <topology evidence="1">Peripheral membrane protein</topology>
    </subcellularLocation>
</comment>
<comment type="similarity">
    <text evidence="1">Belongs to the ATPase gamma chain family.</text>
</comment>
<feature type="chain" id="PRO_0000073229" description="ATP synthase gamma chain">
    <location>
        <begin position="1"/>
        <end position="285"/>
    </location>
</feature>
<reference key="1">
    <citation type="journal article" date="2000" name="Nucleic Acids Res.">
        <title>Complete genome sequence of the alkaliphilic bacterium Bacillus halodurans and genomic sequence comparison with Bacillus subtilis.</title>
        <authorList>
            <person name="Takami H."/>
            <person name="Nakasone K."/>
            <person name="Takaki Y."/>
            <person name="Maeno G."/>
            <person name="Sasaki R."/>
            <person name="Masui N."/>
            <person name="Fuji F."/>
            <person name="Hirama C."/>
            <person name="Nakamura Y."/>
            <person name="Ogasawara N."/>
            <person name="Kuhara S."/>
            <person name="Horikoshi K."/>
        </authorList>
    </citation>
    <scope>NUCLEOTIDE SEQUENCE [LARGE SCALE GENOMIC DNA]</scope>
    <source>
        <strain>ATCC BAA-125 / DSM 18197 / FERM 7344 / JCM 9153 / C-125</strain>
    </source>
</reference>